<accession>Q8BDG7</accession>
<name>VE6_BPV5</name>
<sequence length="134" mass="15581">MPYWLPTYNFEGLQCLQCKKALGSLDALKCKNHKYRRVHRGGKPYGMCQICLEALLQLERQEFPWTLLLPKDFVKVLGRLPGDYCVRCYYCGCVLSDSEKDRHALDHEGYLYVRGRARGRCYSCSSDGRRPCVF</sequence>
<protein>
    <recommendedName>
        <fullName evidence="1">Protein E6</fullName>
    </recommendedName>
</protein>
<reference key="1">
    <citation type="journal article" date="2002" name="J. Virol.">
        <title>Lack of canonical E6 and E7 open reading frames in bird papillomaviruses: Fringilla coelebs papillomavirus and Psittacus erithacus timneh papillomavirus.</title>
        <authorList>
            <person name="Terai M."/>
            <person name="DeSalle R."/>
            <person name="Burk R.D."/>
        </authorList>
    </citation>
    <scope>NUCLEOTIDE SEQUENCE [GENOMIC DNA]</scope>
</reference>
<reference key="2">
    <citation type="submission" date="2004-01" db="EMBL/GenBank/DDBJ databases">
        <title>Sequencing of the complete genomes of BPV 3, BPV 5 and BPV 6.</title>
        <authorList>
            <person name="Delius H."/>
            <person name="de Villiers E.M."/>
        </authorList>
    </citation>
    <scope>NUCLEOTIDE SEQUENCE [GENOMIC DNA]</scope>
</reference>
<dbReference type="EMBL" id="AF457465">
    <property type="protein sequence ID" value="AAN09924.1"/>
    <property type="molecule type" value="Genomic_DNA"/>
</dbReference>
<dbReference type="EMBL" id="AJ620206">
    <property type="protein sequence ID" value="CAF05671.1"/>
    <property type="molecule type" value="Genomic_DNA"/>
</dbReference>
<dbReference type="RefSeq" id="NP_694430.1">
    <property type="nucleotide sequence ID" value="NC_004195.1"/>
</dbReference>
<dbReference type="SMR" id="Q8BDG7"/>
<dbReference type="GeneID" id="955402"/>
<dbReference type="KEGG" id="vg:955402"/>
<dbReference type="Proteomes" id="UP000008785">
    <property type="component" value="Genome"/>
</dbReference>
<dbReference type="Proteomes" id="UP000185273">
    <property type="component" value="Genome"/>
</dbReference>
<dbReference type="GO" id="GO:0030430">
    <property type="term" value="C:host cell cytoplasm"/>
    <property type="evidence" value="ECO:0007669"/>
    <property type="project" value="UniProtKB-SubCell"/>
</dbReference>
<dbReference type="GO" id="GO:0042025">
    <property type="term" value="C:host cell nucleus"/>
    <property type="evidence" value="ECO:0007669"/>
    <property type="project" value="UniProtKB-SubCell"/>
</dbReference>
<dbReference type="GO" id="GO:0003677">
    <property type="term" value="F:DNA binding"/>
    <property type="evidence" value="ECO:0007669"/>
    <property type="project" value="UniProtKB-UniRule"/>
</dbReference>
<dbReference type="GO" id="GO:0008270">
    <property type="term" value="F:zinc ion binding"/>
    <property type="evidence" value="ECO:0007669"/>
    <property type="project" value="UniProtKB-KW"/>
</dbReference>
<dbReference type="GO" id="GO:0006351">
    <property type="term" value="P:DNA-templated transcription"/>
    <property type="evidence" value="ECO:0007669"/>
    <property type="project" value="UniProtKB-UniRule"/>
</dbReference>
<dbReference type="GO" id="GO:0006355">
    <property type="term" value="P:regulation of DNA-templated transcription"/>
    <property type="evidence" value="ECO:0007669"/>
    <property type="project" value="UniProtKB-UniRule"/>
</dbReference>
<dbReference type="GO" id="GO:0052150">
    <property type="term" value="P:symbiont-mediated perturbation of host apoptosis"/>
    <property type="evidence" value="ECO:0007669"/>
    <property type="project" value="UniProtKB-KW"/>
</dbReference>
<dbReference type="GO" id="GO:0039648">
    <property type="term" value="P:symbiont-mediated perturbation of host ubiquitin-like protein modification"/>
    <property type="evidence" value="ECO:0007669"/>
    <property type="project" value="UniProtKB-UniRule"/>
</dbReference>
<dbReference type="GO" id="GO:0052170">
    <property type="term" value="P:symbiont-mediated suppression of host innate immune response"/>
    <property type="evidence" value="ECO:0007669"/>
    <property type="project" value="UniProtKB-KW"/>
</dbReference>
<dbReference type="GO" id="GO:0039502">
    <property type="term" value="P:symbiont-mediated suppression of host type I interferon-mediated signaling pathway"/>
    <property type="evidence" value="ECO:0007669"/>
    <property type="project" value="UniProtKB-UniRule"/>
</dbReference>
<dbReference type="Gene3D" id="3.30.240.40">
    <property type="entry name" value="E6 early regulatory protein"/>
    <property type="match status" value="2"/>
</dbReference>
<dbReference type="HAMAP" id="MF_04006">
    <property type="entry name" value="HPV_E6"/>
    <property type="match status" value="1"/>
</dbReference>
<dbReference type="InterPro" id="IPR001334">
    <property type="entry name" value="E6"/>
</dbReference>
<dbReference type="InterPro" id="IPR038575">
    <property type="entry name" value="E6_sf"/>
</dbReference>
<dbReference type="Pfam" id="PF00518">
    <property type="entry name" value="E6"/>
    <property type="match status" value="1"/>
</dbReference>
<dbReference type="SUPFAM" id="SSF161229">
    <property type="entry name" value="E6 C-terminal domain-like"/>
    <property type="match status" value="2"/>
</dbReference>
<organismHost>
    <name type="scientific">Bos taurus</name>
    <name type="common">Bovine</name>
    <dbReference type="NCBI Taxonomy" id="9913"/>
</organismHost>
<comment type="function">
    <text evidence="1">Plays a major role in the induction and maintenance of cellular transformation. E6 associates with host UBE3A/E6-AP ubiquitin-protein ligase and modulates its activity. Protects host keratinocytes from apoptosis by mediating the degradation of host BAK1. May also inhibit host immune response.</text>
</comment>
<comment type="subunit">
    <text evidence="1">Forms homodimers. Interacts with ubiquitin-protein ligase UBE3A/E6-AP; this interaction stimulates UBE3A ubiquitin activity. Interacts with host BAK1.</text>
</comment>
<comment type="subcellular location">
    <subcellularLocation>
        <location evidence="1">Host cytoplasm</location>
    </subcellularLocation>
    <subcellularLocation>
        <location evidence="1">Host nucleus</location>
    </subcellularLocation>
</comment>
<comment type="similarity">
    <text evidence="1 2">Belongs to the papillomaviridae E6 protein family.</text>
</comment>
<feature type="chain" id="PRO_0000133317" description="Protein E6">
    <location>
        <begin position="1"/>
        <end position="134"/>
    </location>
</feature>
<feature type="zinc finger region" evidence="1">
    <location>
        <begin position="15"/>
        <end position="51"/>
    </location>
</feature>
<feature type="zinc finger region" evidence="1">
    <location>
        <begin position="88"/>
        <end position="124"/>
    </location>
</feature>
<evidence type="ECO:0000255" key="1">
    <source>
        <dbReference type="HAMAP-Rule" id="MF_04006"/>
    </source>
</evidence>
<evidence type="ECO:0000305" key="2"/>
<organism>
    <name type="scientific">Bovine papillomavirus type 5</name>
    <dbReference type="NCBI Taxonomy" id="2491661"/>
    <lineage>
        <taxon>Viruses</taxon>
        <taxon>Monodnaviria</taxon>
        <taxon>Shotokuvirae</taxon>
        <taxon>Cossaviricota</taxon>
        <taxon>Papovaviricetes</taxon>
        <taxon>Zurhausenvirales</taxon>
        <taxon>Papillomaviridae</taxon>
        <taxon>Firstpapillomavirinae</taxon>
        <taxon>Epsilonpapillomavirus</taxon>
        <taxon>Epsilonpapillomavirus 1</taxon>
    </lineage>
</organism>
<gene>
    <name evidence="1" type="primary">E6</name>
</gene>
<keyword id="KW-0010">Activator</keyword>
<keyword id="KW-0238">DNA-binding</keyword>
<keyword id="KW-0244">Early protein</keyword>
<keyword id="KW-1035">Host cytoplasm</keyword>
<keyword id="KW-1048">Host nucleus</keyword>
<keyword id="KW-0945">Host-virus interaction</keyword>
<keyword id="KW-1090">Inhibition of host innate immune response by virus</keyword>
<keyword id="KW-0479">Metal-binding</keyword>
<keyword id="KW-1119">Modulation of host cell apoptosis by virus</keyword>
<keyword id="KW-1185">Reference proteome</keyword>
<keyword id="KW-0804">Transcription</keyword>
<keyword id="KW-0805">Transcription regulation</keyword>
<keyword id="KW-0899">Viral immunoevasion</keyword>
<keyword id="KW-0862">Zinc</keyword>
<keyword id="KW-0863">Zinc-finger</keyword>
<proteinExistence type="inferred from homology"/>